<reference key="1">
    <citation type="journal article" date="2004" name="Nature">
        <title>Genome evolution in yeasts.</title>
        <authorList>
            <person name="Dujon B."/>
            <person name="Sherman D."/>
            <person name="Fischer G."/>
            <person name="Durrens P."/>
            <person name="Casaregola S."/>
            <person name="Lafontaine I."/>
            <person name="de Montigny J."/>
            <person name="Marck C."/>
            <person name="Neuveglise C."/>
            <person name="Talla E."/>
            <person name="Goffard N."/>
            <person name="Frangeul L."/>
            <person name="Aigle M."/>
            <person name="Anthouard V."/>
            <person name="Babour A."/>
            <person name="Barbe V."/>
            <person name="Barnay S."/>
            <person name="Blanchin S."/>
            <person name="Beckerich J.-M."/>
            <person name="Beyne E."/>
            <person name="Bleykasten C."/>
            <person name="Boisrame A."/>
            <person name="Boyer J."/>
            <person name="Cattolico L."/>
            <person name="Confanioleri F."/>
            <person name="de Daruvar A."/>
            <person name="Despons L."/>
            <person name="Fabre E."/>
            <person name="Fairhead C."/>
            <person name="Ferry-Dumazet H."/>
            <person name="Groppi A."/>
            <person name="Hantraye F."/>
            <person name="Hennequin C."/>
            <person name="Jauniaux N."/>
            <person name="Joyet P."/>
            <person name="Kachouri R."/>
            <person name="Kerrest A."/>
            <person name="Koszul R."/>
            <person name="Lemaire M."/>
            <person name="Lesur I."/>
            <person name="Ma L."/>
            <person name="Muller H."/>
            <person name="Nicaud J.-M."/>
            <person name="Nikolski M."/>
            <person name="Oztas S."/>
            <person name="Ozier-Kalogeropoulos O."/>
            <person name="Pellenz S."/>
            <person name="Potier S."/>
            <person name="Richard G.-F."/>
            <person name="Straub M.-L."/>
            <person name="Suleau A."/>
            <person name="Swennen D."/>
            <person name="Tekaia F."/>
            <person name="Wesolowski-Louvel M."/>
            <person name="Westhof E."/>
            <person name="Wirth B."/>
            <person name="Zeniou-Meyer M."/>
            <person name="Zivanovic Y."/>
            <person name="Bolotin-Fukuhara M."/>
            <person name="Thierry A."/>
            <person name="Bouchier C."/>
            <person name="Caudron B."/>
            <person name="Scarpelli C."/>
            <person name="Gaillardin C."/>
            <person name="Weissenbach J."/>
            <person name="Wincker P."/>
            <person name="Souciet J.-L."/>
        </authorList>
    </citation>
    <scope>NUCLEOTIDE SEQUENCE [LARGE SCALE GENOMIC DNA]</scope>
    <source>
        <strain>CLIB 122 / E 150</strain>
    </source>
</reference>
<keyword id="KW-0539">Nucleus</keyword>
<keyword id="KW-1185">Reference proteome</keyword>
<keyword id="KW-0687">Ribonucleoprotein</keyword>
<keyword id="KW-0690">Ribosome biogenesis</keyword>
<keyword id="KW-0698">rRNA processing</keyword>
<proteinExistence type="inferred from homology"/>
<evidence type="ECO:0000250" key="1"/>
<evidence type="ECO:0000256" key="2">
    <source>
        <dbReference type="SAM" id="MobiDB-lite"/>
    </source>
</evidence>
<evidence type="ECO:0000305" key="3"/>
<organism>
    <name type="scientific">Yarrowia lipolytica (strain CLIB 122 / E 150)</name>
    <name type="common">Yeast</name>
    <name type="synonym">Candida lipolytica</name>
    <dbReference type="NCBI Taxonomy" id="284591"/>
    <lineage>
        <taxon>Eukaryota</taxon>
        <taxon>Fungi</taxon>
        <taxon>Dikarya</taxon>
        <taxon>Ascomycota</taxon>
        <taxon>Saccharomycotina</taxon>
        <taxon>Dipodascomycetes</taxon>
        <taxon>Dipodascales</taxon>
        <taxon>Dipodascales incertae sedis</taxon>
        <taxon>Yarrowia</taxon>
    </lineage>
</organism>
<protein>
    <recommendedName>
        <fullName>U3 small nucleolar RNA-associated protein 25</fullName>
        <shortName>U3 snoRNA-associated protein 25</shortName>
    </recommendedName>
    <alternativeName>
        <fullName>U three protein 25</fullName>
    </alternativeName>
</protein>
<name>UTP25_YARLI</name>
<gene>
    <name type="primary">UTP25</name>
    <name type="ordered locus">YALI0D03960g</name>
</gene>
<dbReference type="EMBL" id="CR382130">
    <property type="protein sequence ID" value="CAG80571.1"/>
    <property type="molecule type" value="Genomic_DNA"/>
</dbReference>
<dbReference type="RefSeq" id="XP_502383.1">
    <property type="nucleotide sequence ID" value="XM_502383.1"/>
</dbReference>
<dbReference type="FunCoup" id="Q6CAC9">
    <property type="interactions" value="1290"/>
</dbReference>
<dbReference type="STRING" id="284591.Q6CAC9"/>
<dbReference type="EnsemblFungi" id="CAG80571">
    <property type="protein sequence ID" value="CAG80571"/>
    <property type="gene ID" value="YALI0_D03960g"/>
</dbReference>
<dbReference type="KEGG" id="yli:2910595"/>
<dbReference type="VEuPathDB" id="FungiDB:YALI0_D03960g"/>
<dbReference type="HOGENOM" id="CLU_018705_0_1_1"/>
<dbReference type="InParanoid" id="Q6CAC9"/>
<dbReference type="OMA" id="QDRGDTF"/>
<dbReference type="OrthoDB" id="111614at4891"/>
<dbReference type="Proteomes" id="UP000001300">
    <property type="component" value="Chromosome D"/>
</dbReference>
<dbReference type="GO" id="GO:0005730">
    <property type="term" value="C:nucleolus"/>
    <property type="evidence" value="ECO:0000318"/>
    <property type="project" value="GO_Central"/>
</dbReference>
<dbReference type="GO" id="GO:0032040">
    <property type="term" value="C:small-subunit processome"/>
    <property type="evidence" value="ECO:0000318"/>
    <property type="project" value="GO_Central"/>
</dbReference>
<dbReference type="GO" id="GO:0019843">
    <property type="term" value="F:rRNA binding"/>
    <property type="evidence" value="ECO:0000318"/>
    <property type="project" value="GO_Central"/>
</dbReference>
<dbReference type="GO" id="GO:0034511">
    <property type="term" value="F:U3 snoRNA binding"/>
    <property type="evidence" value="ECO:0000318"/>
    <property type="project" value="GO_Central"/>
</dbReference>
<dbReference type="GO" id="GO:0000462">
    <property type="term" value="P:maturation of SSU-rRNA from tricistronic rRNA transcript (SSU-rRNA, 5.8S rRNA, LSU-rRNA)"/>
    <property type="evidence" value="ECO:0000318"/>
    <property type="project" value="GO_Central"/>
</dbReference>
<dbReference type="InterPro" id="IPR010678">
    <property type="entry name" value="UTP25"/>
</dbReference>
<dbReference type="InterPro" id="IPR053939">
    <property type="entry name" value="UTP25_C"/>
</dbReference>
<dbReference type="InterPro" id="IPR053940">
    <property type="entry name" value="UTP25_NTPase-like"/>
</dbReference>
<dbReference type="PANTHER" id="PTHR12933">
    <property type="entry name" value="ORF PROTEIN-RELATED"/>
    <property type="match status" value="1"/>
</dbReference>
<dbReference type="PANTHER" id="PTHR12933:SF0">
    <property type="entry name" value="U3 SMALL NUCLEOLAR RNA-ASSOCIATED PROTEIN 25 HOMOLOG"/>
    <property type="match status" value="1"/>
</dbReference>
<dbReference type="Pfam" id="PF06862">
    <property type="entry name" value="Utp25_C"/>
    <property type="match status" value="1"/>
</dbReference>
<dbReference type="Pfam" id="PF22916">
    <property type="entry name" value="UTP25_NTPase-like"/>
    <property type="match status" value="1"/>
</dbReference>
<feature type="chain" id="PRO_0000408145" description="U3 small nucleolar RNA-associated protein 25">
    <location>
        <begin position="1"/>
        <end position="641"/>
    </location>
</feature>
<feature type="region of interest" description="Disordered" evidence="2">
    <location>
        <begin position="1"/>
        <end position="22"/>
    </location>
</feature>
<feature type="region of interest" description="Disordered" evidence="2">
    <location>
        <begin position="34"/>
        <end position="93"/>
    </location>
</feature>
<feature type="compositionally biased region" description="Basic residues" evidence="2">
    <location>
        <begin position="1"/>
        <end position="12"/>
    </location>
</feature>
<feature type="compositionally biased region" description="Acidic residues" evidence="2">
    <location>
        <begin position="41"/>
        <end position="86"/>
    </location>
</feature>
<sequence length="641" mass="73440">MARSHKVTKPKRQQVDTSGSYNALMVLMGDNVKKAEKRVEEEEPVEQELEEDDIEGAGEEEEEVDEEQEEEEDADDAEEDAEDDSETDKYDPYKLHFEAEEAKYVSVIKSEEWKTSSEKTKIGSQPVRITYTNLEDADELLDFSEAQKTEFSKYTVRPRIKDGFKQLNGSLTSVQKAIYPSLMAYRDLCYATSSLSDTEEFSRLVAMHIAQHVVRTAEEVAYNTRILKRNAEEGIHDVEFRDQGYTKPRVLVLVPTKNACFEFMQLLVGASGVDREDNKARFNKAFHEAGAVLDTKPEDFQKAFKGNTDDMFCLGVKLRNKSIRYYSYFYQADIVFASPLGLKTLVGSEGDSKREFDFLSSIEIAYLHETNHMEMQSWDNVLTVLGQTNLLPNESHGCDFSRVKSFYLDGLAKHFRQTIVACQFVTPTINSVFSNTVNFAGKTKITPIYNGELAVAGMKIRQIFTRFKALSVSDEIDARFKAFVQITLEGMIRSGDYSGTLIYVPTYVELVRLRNYMDEKNISFGAISEYSSITEVKRHRTLFRDGREKILLYTGRLHHYRRYFVKGVKSVVIYKLPENPAFYRELLLFLTHSVDEGTLEQSMAKCRALFTIYDLLALERIVGTKRVKTMAKSGESSYEFY</sequence>
<comment type="function">
    <text evidence="1">DEAD-box RNA helicase-like protein required for pre-18S rRNA processing, specifically at sites A0, A1, and A2.</text>
</comment>
<comment type="subunit">
    <text evidence="1">Component of the ribosomal small subunit (SSU) processome composed of at least 40 protein subunits and snoRNA U3.</text>
</comment>
<comment type="subcellular location">
    <subcellularLocation>
        <location evidence="1">Nucleus</location>
        <location evidence="1">Nucleolus</location>
    </subcellularLocation>
</comment>
<comment type="similarity">
    <text evidence="3">Belongs to the UTP25 family.</text>
</comment>
<accession>Q6CAC9</accession>